<feature type="chain" id="PRO_0000072816" description="UPF0299 membrane protein VP1300">
    <location>
        <begin position="1"/>
        <end position="124"/>
    </location>
</feature>
<feature type="transmembrane region" description="Helical" evidence="1">
    <location>
        <begin position="9"/>
        <end position="29"/>
    </location>
</feature>
<feature type="transmembrane region" description="Helical" evidence="1">
    <location>
        <begin position="35"/>
        <end position="55"/>
    </location>
</feature>
<feature type="transmembrane region" description="Helical" evidence="1">
    <location>
        <begin position="72"/>
        <end position="92"/>
    </location>
</feature>
<feature type="transmembrane region" description="Helical" evidence="1">
    <location>
        <begin position="95"/>
        <end position="115"/>
    </location>
</feature>
<comment type="subcellular location">
    <subcellularLocation>
        <location evidence="1">Cell inner membrane</location>
        <topology evidence="1">Multi-pass membrane protein</topology>
    </subcellularLocation>
</comment>
<comment type="similarity">
    <text evidence="1">Belongs to the UPF0299 family.</text>
</comment>
<evidence type="ECO:0000255" key="1">
    <source>
        <dbReference type="HAMAP-Rule" id="MF_01144"/>
    </source>
</evidence>
<reference key="1">
    <citation type="journal article" date="2003" name="Lancet">
        <title>Genome sequence of Vibrio parahaemolyticus: a pathogenic mechanism distinct from that of V. cholerae.</title>
        <authorList>
            <person name="Makino K."/>
            <person name="Oshima K."/>
            <person name="Kurokawa K."/>
            <person name="Yokoyama K."/>
            <person name="Uda T."/>
            <person name="Tagomori K."/>
            <person name="Iijima Y."/>
            <person name="Najima M."/>
            <person name="Nakano M."/>
            <person name="Yamashita A."/>
            <person name="Kubota Y."/>
            <person name="Kimura S."/>
            <person name="Yasunaga T."/>
            <person name="Honda T."/>
            <person name="Shinagawa H."/>
            <person name="Hattori M."/>
            <person name="Iida T."/>
        </authorList>
    </citation>
    <scope>NUCLEOTIDE SEQUENCE [LARGE SCALE GENOMIC DNA]</scope>
    <source>
        <strain>RIMD 2210633</strain>
    </source>
</reference>
<sequence length="124" mass="13602">MIKDRFLQLIQLLISLFLIMGALGIGITIQKFTGVSVPGSVIGMLVLFFSMTLGLVKVDWVKPGATLFIRYMILLFVPISVGLMQHFDMLLANALPIIASAVGGSLIVLVSLAWLLDYLLKEKH</sequence>
<keyword id="KW-0997">Cell inner membrane</keyword>
<keyword id="KW-1003">Cell membrane</keyword>
<keyword id="KW-0472">Membrane</keyword>
<keyword id="KW-0812">Transmembrane</keyword>
<keyword id="KW-1133">Transmembrane helix</keyword>
<organism>
    <name type="scientific">Vibrio parahaemolyticus serotype O3:K6 (strain RIMD 2210633)</name>
    <dbReference type="NCBI Taxonomy" id="223926"/>
    <lineage>
        <taxon>Bacteria</taxon>
        <taxon>Pseudomonadati</taxon>
        <taxon>Pseudomonadota</taxon>
        <taxon>Gammaproteobacteria</taxon>
        <taxon>Vibrionales</taxon>
        <taxon>Vibrionaceae</taxon>
        <taxon>Vibrio</taxon>
    </lineage>
</organism>
<dbReference type="EMBL" id="BA000031">
    <property type="protein sequence ID" value="BAC59563.1"/>
    <property type="molecule type" value="Genomic_DNA"/>
</dbReference>
<dbReference type="RefSeq" id="NP_797679.1">
    <property type="nucleotide sequence ID" value="NC_004603.1"/>
</dbReference>
<dbReference type="RefSeq" id="WP_005455074.1">
    <property type="nucleotide sequence ID" value="NC_004603.1"/>
</dbReference>
<dbReference type="SMR" id="Q87Q50"/>
<dbReference type="GeneID" id="1188805"/>
<dbReference type="KEGG" id="vpa:VP1300"/>
<dbReference type="PATRIC" id="fig|223926.6.peg.1240"/>
<dbReference type="eggNOG" id="COG1380">
    <property type="taxonomic scope" value="Bacteria"/>
</dbReference>
<dbReference type="HOGENOM" id="CLU_113736_1_1_6"/>
<dbReference type="Proteomes" id="UP000002493">
    <property type="component" value="Chromosome 1"/>
</dbReference>
<dbReference type="GO" id="GO:0005886">
    <property type="term" value="C:plasma membrane"/>
    <property type="evidence" value="ECO:0007669"/>
    <property type="project" value="UniProtKB-SubCell"/>
</dbReference>
<dbReference type="HAMAP" id="MF_01144">
    <property type="entry name" value="UPF0299"/>
    <property type="match status" value="1"/>
</dbReference>
<dbReference type="InterPro" id="IPR005538">
    <property type="entry name" value="LrgA/CidA"/>
</dbReference>
<dbReference type="InterPro" id="IPR022957">
    <property type="entry name" value="Uncharacterised_UPF0299"/>
</dbReference>
<dbReference type="PANTHER" id="PTHR33931">
    <property type="entry name" value="HOLIN-LIKE PROTEIN CIDA-RELATED"/>
    <property type="match status" value="1"/>
</dbReference>
<dbReference type="PANTHER" id="PTHR33931:SF5">
    <property type="entry name" value="UPF0299 MEMBRANE PROTEIN YOHJ"/>
    <property type="match status" value="1"/>
</dbReference>
<dbReference type="Pfam" id="PF03788">
    <property type="entry name" value="LrgA"/>
    <property type="match status" value="1"/>
</dbReference>
<gene>
    <name type="ordered locus">VP1300</name>
</gene>
<proteinExistence type="inferred from homology"/>
<accession>Q87Q50</accession>
<protein>
    <recommendedName>
        <fullName evidence="1">UPF0299 membrane protein VP1300</fullName>
    </recommendedName>
</protein>
<name>Y1300_VIBPA</name>